<sequence>MAEVVAVDVGATWVRMAIVRGGVIEAIKRERNPGTEEGLERVLQGLAEGLGIDRGRVEKVGAASIGPLDLRRGYIVGSPNIKSHIVRLSTILKRLFPKSKVAIANDAVAAAWGEYLLGRLAGTPDLGYITMSTGVGGGFVVGGRLLLGSRGNAHEVGHIVVDMGWEGGRCGCGGTGHWEAIAGGRWIPRTSSVLARGWRGPETSLYRAALEGRVGSAREVFEAAAVGDDFALHVIDYIARASAAGIASVKAAYDVDAVIIGGSVYLNNRRMLRPLIERHLAAYAPFSSRIEVVDASFGDNEGVMGAYAIAYRNPEDLPIF</sequence>
<comment type="function">
    <text evidence="1 2">Catalyzes the phosphorylation of D-glucose to D-glucose 6-phosphate using ATP as the phosphate donor (PubMed:12374829, PubMed:12761185). ITP can also serve as an effective phosphoryl donor (PubMed:12374829, PubMed:12761185). According to Hansen et al., the enzyme has a broad hexose specificity, and in addition to glucose, which shows the highest catalytic efficiency, it can also phosphorylate fructose, mannose, glucosamine, N-acetylglucosamine, N-acetylmannosamine and 2-deoxyglucose (PubMed:12374829). However, according to Sakuraba et al., the enzyme shows strict specificity for D-glucose (PubMed:12761185).</text>
</comment>
<comment type="catalytic activity">
    <reaction evidence="1 2">
        <text>D-glucose + ATP = D-glucose 6-phosphate + ADP + H(+)</text>
        <dbReference type="Rhea" id="RHEA:17825"/>
        <dbReference type="ChEBI" id="CHEBI:4167"/>
        <dbReference type="ChEBI" id="CHEBI:15378"/>
        <dbReference type="ChEBI" id="CHEBI:30616"/>
        <dbReference type="ChEBI" id="CHEBI:61548"/>
        <dbReference type="ChEBI" id="CHEBI:456216"/>
        <dbReference type="EC" id="2.7.1.2"/>
    </reaction>
</comment>
<comment type="cofactor">
    <cofactor evidence="1 2">
        <name>a divalent metal cation</name>
        <dbReference type="ChEBI" id="CHEBI:60240"/>
    </cofactor>
    <text evidence="1 2">Mg(2+) is the most effective ion. It can be partially replaced with Co(2+), Mn(2+), Ni(2+), Cu(2+) or Ca(2+).</text>
</comment>
<comment type="biophysicochemical properties">
    <kinetics>
        <KM evidence="1">44 uM for glucose</KM>
        <KM evidence="2">54 uM for D-glucose</KM>
        <KM evidence="1">330 uM for 2-deoxyglucose</KM>
        <KM evidence="1">60 uM for glucosamine</KM>
        <KM evidence="1">150 uM for fructose</KM>
        <KM evidence="1">110 uM for mannose</KM>
        <KM evidence="1">420 uM for ATP</KM>
        <KM evidence="2">500 uM for ATP</KM>
        <text evidence="1">kcat is 23 sec(-1) with glucose as substrate. kcat is 30 sec(-1) with 2-deoxyglucose as substrate. kcat is 18 sec(-1) with glucosamine as substrate. kcat is 10 sec(-1) with fructose as substrate. kcat is 13 sec(-1) with mannose as substrate.</text>
    </kinetics>
    <phDependence>
        <text evidence="1">Optimum pH is 6.2.</text>
    </phDependence>
    <temperatureDependence>
        <text evidence="1">Activity increases exponentially up to 100 degrees Celsius, the highest temperature tested.</text>
    </temperatureDependence>
</comment>
<comment type="subunit">
    <text evidence="1 2">Monomer.</text>
</comment>
<comment type="similarity">
    <text evidence="4">Belongs to the ROK (NagC/XylR) family.</text>
</comment>
<feature type="chain" id="PRO_0000448973" description="Glucokinase">
    <location>
        <begin position="1"/>
        <end position="320"/>
    </location>
</feature>
<organism>
    <name type="scientific">Aeropyrum pernix (strain ATCC 700893 / DSM 11879 / JCM 9820 / NBRC 100138 / K1)</name>
    <dbReference type="NCBI Taxonomy" id="272557"/>
    <lineage>
        <taxon>Archaea</taxon>
        <taxon>Thermoproteota</taxon>
        <taxon>Thermoprotei</taxon>
        <taxon>Desulfurococcales</taxon>
        <taxon>Desulfurococcaceae</taxon>
        <taxon>Aeropyrum</taxon>
    </lineage>
</organism>
<evidence type="ECO:0000269" key="1">
    <source>
    </source>
</evidence>
<evidence type="ECO:0000269" key="2">
    <source>
    </source>
</evidence>
<evidence type="ECO:0000303" key="3">
    <source>
    </source>
</evidence>
<evidence type="ECO:0000305" key="4"/>
<evidence type="ECO:0000312" key="5">
    <source>
        <dbReference type="EMBL" id="BAA81102.2"/>
    </source>
</evidence>
<reference key="1">
    <citation type="journal article" date="1999" name="DNA Res.">
        <title>Complete genome sequence of an aerobic hyper-thermophilic crenarchaeon, Aeropyrum pernix K1.</title>
        <authorList>
            <person name="Kawarabayasi Y."/>
            <person name="Hino Y."/>
            <person name="Horikawa H."/>
            <person name="Yamazaki S."/>
            <person name="Haikawa Y."/>
            <person name="Jin-no K."/>
            <person name="Takahashi M."/>
            <person name="Sekine M."/>
            <person name="Baba S."/>
            <person name="Ankai A."/>
            <person name="Kosugi H."/>
            <person name="Hosoyama A."/>
            <person name="Fukui S."/>
            <person name="Nagai Y."/>
            <person name="Nishijima K."/>
            <person name="Nakazawa H."/>
            <person name="Takamiya M."/>
            <person name="Masuda S."/>
            <person name="Funahashi T."/>
            <person name="Tanaka T."/>
            <person name="Kudoh Y."/>
            <person name="Yamazaki J."/>
            <person name="Kushida N."/>
            <person name="Oguchi A."/>
            <person name="Aoki K."/>
            <person name="Kubota K."/>
            <person name="Nakamura Y."/>
            <person name="Nomura N."/>
            <person name="Sako Y."/>
            <person name="Kikuchi H."/>
        </authorList>
    </citation>
    <scope>NUCLEOTIDE SEQUENCE [LARGE SCALE GENOMIC DNA]</scope>
    <source>
        <strain>ATCC 700893 / DSM 11879 / JCM 9820 / NBRC 100138 / K1</strain>
    </source>
</reference>
<reference key="2">
    <citation type="journal article" date="2002" name="J. Bacteriol.">
        <title>The first archaeal ATP-dependent glucokinase, from the hyperthermophilic crenarchaeon Aeropyrum pernix, represents a monomeric, extremely thermophilic ROK glucokinase with broad hexose specificity.</title>
        <authorList>
            <person name="Hansen T."/>
            <person name="Reichstein B."/>
            <person name="Schmid R."/>
            <person name="Schoenheit P."/>
        </authorList>
    </citation>
    <scope>PROTEIN SEQUENCE OF 1-11</scope>
    <scope>FUNCTION</scope>
    <scope>CATALYTIC ACTIVITY</scope>
    <scope>COFACTOR</scope>
    <scope>BIOPHYSICOCHEMICAL PROPERTIES</scope>
    <scope>SUBUNIT</scope>
    <source>
        <strain>ATCC 700893 / DSM 11879 / JCM 9820 / NBRC 100138 / K1</strain>
    </source>
</reference>
<reference key="3">
    <citation type="journal article" date="2003" name="J. Biochem.">
        <title>Cloning, expression, and characterization of the first archaeal ATP-dependent glucokinase from aerobic hyperthermophilic archaeon Aeropyrum pernix.</title>
        <authorList>
            <person name="Sakuraba H."/>
            <person name="Mitani Y."/>
            <person name="Goda S."/>
            <person name="Kawarabayasi Y."/>
            <person name="Ohshima T."/>
        </authorList>
    </citation>
    <scope>FUNCTION</scope>
    <scope>CATALYTIC ACTIVITY</scope>
    <scope>COFACTOR</scope>
    <scope>BIOPHYSICOCHEMICAL PROPERTIES</scope>
    <scope>SUBUNIT</scope>
</reference>
<name>GLK_AERPE</name>
<protein>
    <recommendedName>
        <fullName evidence="3">Glucokinase</fullName>
        <ecNumber evidence="1">2.7.1.2</ecNumber>
    </recommendedName>
    <alternativeName>
        <fullName evidence="3">ATP-dependent glucokinase</fullName>
        <shortName evidence="3">ATP-GLK</shortName>
    </alternativeName>
    <alternativeName>
        <fullName evidence="4">Glucose kinase</fullName>
    </alternativeName>
</protein>
<proteinExistence type="evidence at protein level"/>
<dbReference type="EC" id="2.7.1.2" evidence="1"/>
<dbReference type="EMBL" id="BA000002">
    <property type="protein sequence ID" value="BAA81102.2"/>
    <property type="molecule type" value="Genomic_DNA"/>
</dbReference>
<dbReference type="PIR" id="F72514">
    <property type="entry name" value="F72514"/>
</dbReference>
<dbReference type="RefSeq" id="WP_010866790.1">
    <property type="nucleotide sequence ID" value="NC_000854.2"/>
</dbReference>
<dbReference type="SMR" id="Q9YA47"/>
<dbReference type="STRING" id="272557.APE_2091.1"/>
<dbReference type="EnsemblBacteria" id="BAA81102">
    <property type="protein sequence ID" value="BAA81102"/>
    <property type="gene ID" value="APE_2091.1"/>
</dbReference>
<dbReference type="GeneID" id="1445186"/>
<dbReference type="KEGG" id="ape:APE_2091.1"/>
<dbReference type="PATRIC" id="fig|272557.25.peg.1395"/>
<dbReference type="eggNOG" id="arCOG04280">
    <property type="taxonomic scope" value="Archaea"/>
</dbReference>
<dbReference type="SABIO-RK" id="Q9YA47"/>
<dbReference type="Proteomes" id="UP000002518">
    <property type="component" value="Chromosome"/>
</dbReference>
<dbReference type="GO" id="GO:0005524">
    <property type="term" value="F:ATP binding"/>
    <property type="evidence" value="ECO:0007669"/>
    <property type="project" value="UniProtKB-KW"/>
</dbReference>
<dbReference type="GO" id="GO:0004340">
    <property type="term" value="F:glucokinase activity"/>
    <property type="evidence" value="ECO:0007669"/>
    <property type="project" value="UniProtKB-EC"/>
</dbReference>
<dbReference type="GO" id="GO:0009384">
    <property type="term" value="F:N-acylmannosamine kinase activity"/>
    <property type="evidence" value="ECO:0007669"/>
    <property type="project" value="TreeGrafter"/>
</dbReference>
<dbReference type="GO" id="GO:0008761">
    <property type="term" value="F:UDP-N-acetylglucosamine 2-epimerase activity"/>
    <property type="evidence" value="ECO:0007669"/>
    <property type="project" value="TreeGrafter"/>
</dbReference>
<dbReference type="GO" id="GO:0006006">
    <property type="term" value="P:glucose metabolic process"/>
    <property type="evidence" value="ECO:0007669"/>
    <property type="project" value="UniProtKB-KW"/>
</dbReference>
<dbReference type="Gene3D" id="3.30.420.40">
    <property type="match status" value="2"/>
</dbReference>
<dbReference type="InterPro" id="IPR043129">
    <property type="entry name" value="ATPase_NBD"/>
</dbReference>
<dbReference type="InterPro" id="IPR000600">
    <property type="entry name" value="ROK"/>
</dbReference>
<dbReference type="PANTHER" id="PTHR18964:SF149">
    <property type="entry name" value="BIFUNCTIONAL UDP-N-ACETYLGLUCOSAMINE 2-EPIMERASE_N-ACETYLMANNOSAMINE KINASE"/>
    <property type="match status" value="1"/>
</dbReference>
<dbReference type="PANTHER" id="PTHR18964">
    <property type="entry name" value="ROK (REPRESSOR, ORF, KINASE) FAMILY"/>
    <property type="match status" value="1"/>
</dbReference>
<dbReference type="Pfam" id="PF00480">
    <property type="entry name" value="ROK"/>
    <property type="match status" value="1"/>
</dbReference>
<dbReference type="SUPFAM" id="SSF53067">
    <property type="entry name" value="Actin-like ATPase domain"/>
    <property type="match status" value="1"/>
</dbReference>
<accession>Q9YA47</accession>
<keyword id="KW-0067">ATP-binding</keyword>
<keyword id="KW-0119">Carbohydrate metabolism</keyword>
<keyword id="KW-0903">Direct protein sequencing</keyword>
<keyword id="KW-0313">Glucose metabolism</keyword>
<keyword id="KW-0418">Kinase</keyword>
<keyword id="KW-0460">Magnesium</keyword>
<keyword id="KW-0547">Nucleotide-binding</keyword>
<keyword id="KW-1185">Reference proteome</keyword>
<keyword id="KW-0808">Transferase</keyword>
<gene>
    <name evidence="3" type="primary">glk</name>
    <name evidence="5" type="ordered locus">APE_2091.1</name>
</gene>